<name>HSLU2_TRYB2</name>
<organism>
    <name type="scientific">Trypanosoma brucei brucei (strain 927/4 GUTat10.1)</name>
    <dbReference type="NCBI Taxonomy" id="185431"/>
    <lineage>
        <taxon>Eukaryota</taxon>
        <taxon>Discoba</taxon>
        <taxon>Euglenozoa</taxon>
        <taxon>Kinetoplastea</taxon>
        <taxon>Metakinetoplastina</taxon>
        <taxon>Trypanosomatida</taxon>
        <taxon>Trypanosomatidae</taxon>
        <taxon>Trypanosoma</taxon>
    </lineage>
</organism>
<reference key="1">
    <citation type="journal article" date="2005" name="Science">
        <title>The genome of the African trypanosome Trypanosoma brucei.</title>
        <authorList>
            <person name="Berriman M."/>
            <person name="Ghedin E."/>
            <person name="Hertz-Fowler C."/>
            <person name="Blandin G."/>
            <person name="Renauld H."/>
            <person name="Bartholomeu D.C."/>
            <person name="Lennard N.J."/>
            <person name="Caler E."/>
            <person name="Hamlin N.E."/>
            <person name="Haas B."/>
            <person name="Bohme U."/>
            <person name="Hannick L."/>
            <person name="Aslett M.A."/>
            <person name="Shallom J."/>
            <person name="Marcello L."/>
            <person name="Hou L."/>
            <person name="Wickstead B."/>
            <person name="Alsmark U.C.M."/>
            <person name="Arrowsmith C."/>
            <person name="Atkin R.J."/>
            <person name="Barron A.J."/>
            <person name="Bringaud F."/>
            <person name="Brooks K."/>
            <person name="Carrington M."/>
            <person name="Cherevach I."/>
            <person name="Chillingworth T.J."/>
            <person name="Churcher C."/>
            <person name="Clark L.N."/>
            <person name="Corton C.H."/>
            <person name="Cronin A."/>
            <person name="Davies R.M."/>
            <person name="Doggett J."/>
            <person name="Djikeng A."/>
            <person name="Feldblyum T."/>
            <person name="Field M.C."/>
            <person name="Fraser A."/>
            <person name="Goodhead I."/>
            <person name="Hance Z."/>
            <person name="Harper D."/>
            <person name="Harris B.R."/>
            <person name="Hauser H."/>
            <person name="Hostetler J."/>
            <person name="Ivens A."/>
            <person name="Jagels K."/>
            <person name="Johnson D."/>
            <person name="Johnson J."/>
            <person name="Jones K."/>
            <person name="Kerhornou A.X."/>
            <person name="Koo H."/>
            <person name="Larke N."/>
            <person name="Landfear S."/>
            <person name="Larkin C."/>
            <person name="Leech V."/>
            <person name="Line A."/>
            <person name="Lord A."/>
            <person name="Macleod A."/>
            <person name="Mooney P.J."/>
            <person name="Moule S."/>
            <person name="Martin D.M."/>
            <person name="Morgan G.W."/>
            <person name="Mungall K."/>
            <person name="Norbertczak H."/>
            <person name="Ormond D."/>
            <person name="Pai G."/>
            <person name="Peacock C.S."/>
            <person name="Peterson J."/>
            <person name="Quail M.A."/>
            <person name="Rabbinowitsch E."/>
            <person name="Rajandream M.A."/>
            <person name="Reitter C."/>
            <person name="Salzberg S.L."/>
            <person name="Sanders M."/>
            <person name="Schobel S."/>
            <person name="Sharp S."/>
            <person name="Simmonds M."/>
            <person name="Simpson A.J."/>
            <person name="Tallon L."/>
            <person name="Turner C.M."/>
            <person name="Tait A."/>
            <person name="Tivey A.R."/>
            <person name="Van Aken S."/>
            <person name="Walker D."/>
            <person name="Wanless D."/>
            <person name="Wang S."/>
            <person name="White B."/>
            <person name="White O."/>
            <person name="Whitehead S."/>
            <person name="Woodward J."/>
            <person name="Wortman J."/>
            <person name="Adams M.D."/>
            <person name="Embley T.M."/>
            <person name="Gull K."/>
            <person name="Ullu E."/>
            <person name="Barry J.D."/>
            <person name="Fairlamb A.H."/>
            <person name="Opperdoes F."/>
            <person name="Barrell B.G."/>
            <person name="Donelson J.E."/>
            <person name="Hall N."/>
            <person name="Fraser C.M."/>
            <person name="Melville S.E."/>
            <person name="El-Sayed N.M.A."/>
        </authorList>
    </citation>
    <scope>NUCLEOTIDE SEQUENCE [LARGE SCALE GENOMIC DNA]</scope>
    <source>
        <strain evidence="6">927/4 GUTat10.1</strain>
    </source>
</reference>
<reference key="2">
    <citation type="journal article" date="2008" name="PLoS Pathog.">
        <title>Identification of a bacterial-like HslVU protease in the mitochondria of Trypanosoma brucei and its role in mitochondrial DNA replication.</title>
        <authorList>
            <person name="Li Z."/>
            <person name="Lindsay M.E."/>
            <person name="Motyka S.A."/>
            <person name="Englund P.T."/>
            <person name="Wang C.C."/>
        </authorList>
    </citation>
    <scope>FUNCTION</scope>
    <scope>SUBCELLULAR LOCATION</scope>
</reference>
<comment type="function">
    <text evidence="1 4">ATPase subunit of a proteasome-like degradation complex; this subunit has chaperone activity. The binding of ATP and its subsequent hydrolysis by HslU are essential for unfolding of protein substrates subsequently hydrolyzed by HslV. HslU recognizes the N-terminal part of its protein substrates and unfolds these before they are guided to HslV for hydrolysis (By similarity). The HslVU protease complex functions in mitochondrial DNA replication by regulating DNA helicase PIF2 protein levels.</text>
</comment>
<comment type="subunit">
    <text evidence="1">A double ring-shaped homohexamer of HslV is capped on each side by a ring-shaped HslU homohexamer. The assembly of the HslU/HslV complex (HslVU) is dependent on binding of ATP (By similarity).</text>
</comment>
<comment type="subcellular location">
    <subcellularLocation>
        <location evidence="4">Mitochondrion matrix</location>
        <location evidence="4">Kinetoplast</location>
    </subcellularLocation>
    <text>Associated with kinetoplast DNA (kDNA).</text>
</comment>
<comment type="similarity">
    <text evidence="5">Belongs to the ClpX chaperone family. HslU subfamily.</text>
</comment>
<gene>
    <name type="primary">HslU2</name>
    <name type="ORF">Tb11.01.4050</name>
</gene>
<dbReference type="EMBL" id="CH464491">
    <property type="protein sequence ID" value="EAN80173.1"/>
    <property type="molecule type" value="Genomic_DNA"/>
</dbReference>
<dbReference type="RefSeq" id="XP_829285.1">
    <property type="nucleotide sequence ID" value="XM_824192.1"/>
</dbReference>
<dbReference type="SMR" id="Q382V8"/>
<dbReference type="STRING" id="185431.Q382V8"/>
<dbReference type="PaxDb" id="5691-EAN80173"/>
<dbReference type="GeneID" id="3665507"/>
<dbReference type="KEGG" id="tbr:Tb11.01.4050"/>
<dbReference type="VEuPathDB" id="TriTrypDB:Tb927.11.12230"/>
<dbReference type="eggNOG" id="KOG0745">
    <property type="taxonomic scope" value="Eukaryota"/>
</dbReference>
<dbReference type="InParanoid" id="Q382V8"/>
<dbReference type="OrthoDB" id="1721884at2759"/>
<dbReference type="BRENDA" id="3.4.25.2">
    <property type="organism ID" value="6519"/>
</dbReference>
<dbReference type="Proteomes" id="UP000008524">
    <property type="component" value="Chromosome 11 Scaffold 1"/>
</dbReference>
<dbReference type="GO" id="GO:0009376">
    <property type="term" value="C:HslUV protease complex"/>
    <property type="evidence" value="ECO:0000314"/>
    <property type="project" value="GeneDB"/>
</dbReference>
<dbReference type="GO" id="GO:0020023">
    <property type="term" value="C:kinetoplast"/>
    <property type="evidence" value="ECO:0000314"/>
    <property type="project" value="GeneDB"/>
</dbReference>
<dbReference type="GO" id="GO:0042645">
    <property type="term" value="C:mitochondrial nucleoid"/>
    <property type="evidence" value="ECO:0000314"/>
    <property type="project" value="GeneDB"/>
</dbReference>
<dbReference type="GO" id="GO:0005739">
    <property type="term" value="C:mitochondrion"/>
    <property type="evidence" value="ECO:0000314"/>
    <property type="project" value="GeneDB"/>
</dbReference>
<dbReference type="GO" id="GO:0005524">
    <property type="term" value="F:ATP binding"/>
    <property type="evidence" value="ECO:0000318"/>
    <property type="project" value="GO_Central"/>
</dbReference>
<dbReference type="GO" id="GO:0016887">
    <property type="term" value="F:ATP hydrolysis activity"/>
    <property type="evidence" value="ECO:0000318"/>
    <property type="project" value="GO_Central"/>
</dbReference>
<dbReference type="GO" id="GO:0008233">
    <property type="term" value="F:peptidase activity"/>
    <property type="evidence" value="ECO:0007669"/>
    <property type="project" value="InterPro"/>
</dbReference>
<dbReference type="GO" id="GO:0006264">
    <property type="term" value="P:mitochondrial DNA replication"/>
    <property type="evidence" value="ECO:0000315"/>
    <property type="project" value="GeneDB"/>
</dbReference>
<dbReference type="GO" id="GO:0051603">
    <property type="term" value="P:proteolysis involved in protein catabolic process"/>
    <property type="evidence" value="ECO:0000318"/>
    <property type="project" value="GO_Central"/>
</dbReference>
<dbReference type="Gene3D" id="1.10.8.60">
    <property type="match status" value="1"/>
</dbReference>
<dbReference type="Gene3D" id="3.40.50.300">
    <property type="entry name" value="P-loop containing nucleotide triphosphate hydrolases"/>
    <property type="match status" value="2"/>
</dbReference>
<dbReference type="InterPro" id="IPR003593">
    <property type="entry name" value="AAA+_ATPase"/>
</dbReference>
<dbReference type="InterPro" id="IPR050052">
    <property type="entry name" value="ATP-dep_Clp_protease_ClpX"/>
</dbReference>
<dbReference type="InterPro" id="IPR003959">
    <property type="entry name" value="ATPase_AAA_core"/>
</dbReference>
<dbReference type="InterPro" id="IPR011704">
    <property type="entry name" value="ATPase_dyneun-rel_AAA"/>
</dbReference>
<dbReference type="InterPro" id="IPR019489">
    <property type="entry name" value="Clp_ATPase_C"/>
</dbReference>
<dbReference type="InterPro" id="IPR004491">
    <property type="entry name" value="HslU"/>
</dbReference>
<dbReference type="InterPro" id="IPR027417">
    <property type="entry name" value="P-loop_NTPase"/>
</dbReference>
<dbReference type="NCBIfam" id="TIGR00390">
    <property type="entry name" value="hslU"/>
    <property type="match status" value="1"/>
</dbReference>
<dbReference type="NCBIfam" id="NF003544">
    <property type="entry name" value="PRK05201.1"/>
    <property type="match status" value="1"/>
</dbReference>
<dbReference type="PANTHER" id="PTHR48102">
    <property type="entry name" value="ATP-DEPENDENT CLP PROTEASE ATP-BINDING SUBUNIT CLPX-LIKE, MITOCHONDRIAL-RELATED"/>
    <property type="match status" value="1"/>
</dbReference>
<dbReference type="PANTHER" id="PTHR48102:SF2">
    <property type="entry name" value="ATP-DEPENDENT PROTEASE ATPASE SUBUNIT HSLU2"/>
    <property type="match status" value="1"/>
</dbReference>
<dbReference type="Pfam" id="PF07724">
    <property type="entry name" value="AAA_2"/>
    <property type="match status" value="1"/>
</dbReference>
<dbReference type="Pfam" id="PF07728">
    <property type="entry name" value="AAA_5"/>
    <property type="match status" value="1"/>
</dbReference>
<dbReference type="SMART" id="SM00382">
    <property type="entry name" value="AAA"/>
    <property type="match status" value="1"/>
</dbReference>
<dbReference type="SMART" id="SM01086">
    <property type="entry name" value="ClpB_D2-small"/>
    <property type="match status" value="1"/>
</dbReference>
<dbReference type="SUPFAM" id="SSF52540">
    <property type="entry name" value="P-loop containing nucleoside triphosphate hydrolases"/>
    <property type="match status" value="1"/>
</dbReference>
<proteinExistence type="inferred from homology"/>
<feature type="transit peptide" description="Mitochondrion" evidence="2">
    <location>
        <begin position="1"/>
        <end position="10"/>
    </location>
</feature>
<feature type="chain" id="PRO_0000423756" description="ATP-dependent protease ATPase subunit HslU2">
    <location>
        <begin position="11"/>
        <end position="496"/>
    </location>
</feature>
<feature type="region of interest" description="Disordered" evidence="3">
    <location>
        <begin position="177"/>
        <end position="204"/>
    </location>
</feature>
<feature type="compositionally biased region" description="Low complexity" evidence="3">
    <location>
        <begin position="177"/>
        <end position="191"/>
    </location>
</feature>
<feature type="binding site" evidence="1">
    <location>
        <position position="51"/>
    </location>
    <ligand>
        <name>ATP</name>
        <dbReference type="ChEBI" id="CHEBI:30616"/>
    </ligand>
</feature>
<feature type="binding site" evidence="1">
    <location>
        <begin position="94"/>
        <end position="99"/>
    </location>
    <ligand>
        <name>ATP</name>
        <dbReference type="ChEBI" id="CHEBI:30616"/>
    </ligand>
</feature>
<feature type="binding site" evidence="1">
    <location>
        <position position="308"/>
    </location>
    <ligand>
        <name>ATP</name>
        <dbReference type="ChEBI" id="CHEBI:30616"/>
    </ligand>
</feature>
<feature type="binding site" evidence="1">
    <location>
        <position position="374"/>
    </location>
    <ligand>
        <name>ATP</name>
        <dbReference type="ChEBI" id="CHEBI:30616"/>
    </ligand>
</feature>
<feature type="binding site" evidence="1">
    <location>
        <position position="446"/>
    </location>
    <ligand>
        <name>ATP</name>
        <dbReference type="ChEBI" id="CHEBI:30616"/>
    </ligand>
</feature>
<protein>
    <recommendedName>
        <fullName>ATP-dependent protease ATPase subunit HslU2</fullName>
    </recommendedName>
    <alternativeName>
        <fullName>Mitochondrial proteasome-like protease HslVU ATPase subunit 2</fullName>
    </alternativeName>
</protein>
<keyword id="KW-0067">ATP-binding</keyword>
<keyword id="KW-0143">Chaperone</keyword>
<keyword id="KW-0419">Kinetoplast</keyword>
<keyword id="KW-0496">Mitochondrion</keyword>
<keyword id="KW-0547">Nucleotide-binding</keyword>
<keyword id="KW-1185">Reference proteome</keyword>
<keyword id="KW-0809">Transit peptide</keyword>
<evidence type="ECO:0000250" key="1"/>
<evidence type="ECO:0000255" key="2"/>
<evidence type="ECO:0000256" key="3">
    <source>
        <dbReference type="SAM" id="MobiDB-lite"/>
    </source>
</evidence>
<evidence type="ECO:0000269" key="4">
    <source>
    </source>
</evidence>
<evidence type="ECO:0000305" key="5"/>
<evidence type="ECO:0000312" key="6">
    <source>
        <dbReference type="Proteomes" id="UP000008524"/>
    </source>
</evidence>
<accession>Q382V8</accession>
<sequence>MIRFSWVRLCSSAMAAAAASPDVQAITRAQAMQLDDLSPRKIASILDSYIVGQAEGKRAVAISLRNRWRRRQIEDEGLRRDILPKNILLVGPTGVGKTEISRRMAKLTEAPFVKVEATKYTEVGFKGKDVESIIEDLYSNAKTKAKRRLEIEREKEAHELALEIVFNGWHSCRSASGSFGSSTRNSGSGDSSAEEDKNSSSRDNVTFEEFKEKYKTQFKDDMVVIDVTQQPKGNTKPNASINSVEMLSVGILLGLGSESRGVKTRVTKRVEEALPLATQEALSRLVDETQISALARTLAEQDGVVFIDEIDKVVTEPASANADVSSTGVQQDLLPLIEGSNVTLKDGSQISTDNILFICSGAFHTVKTSDMIAELQGRLPVRVEMHALKEEDIRRILCEPKFNLLLQQKALMKTENIDLEFTPDAVDELARVTTKVNANAQNIGARRLHTVVERVMDEYSFNCQDYEGKKVVIDAEVVRKATGSLMNNIDLAKYIL</sequence>